<keyword id="KW-1015">Disulfide bond</keyword>
<keyword id="KW-0528">Neurotoxin</keyword>
<keyword id="KW-0964">Secreted</keyword>
<keyword id="KW-0732">Signal</keyword>
<keyword id="KW-0800">Toxin</keyword>
<evidence type="ECO:0000269" key="1">
    <source>
    </source>
</evidence>
<evidence type="ECO:0000303" key="2">
    <source>
    </source>
</evidence>
<evidence type="ECO:0000305" key="3">
    <source>
    </source>
</evidence>
<evidence type="ECO:0000312" key="4">
    <source>
        <dbReference type="EMBL" id="AAV34602.1"/>
    </source>
</evidence>
<reference key="1">
    <citation type="submission" date="2004-09" db="EMBL/GenBank/DDBJ databases">
        <title>Sequence of a neurotoxin, HT-1 from the Australian paralysis tick, Ixodes holocyclus.</title>
        <authorList>
            <person name="Masina S."/>
            <person name="Thurn M.J."/>
            <person name="Padula M."/>
            <person name="Broady K.W."/>
        </authorList>
    </citation>
    <scope>NUCLEOTIDE SEQUENCE [MRNA]</scope>
</reference>
<reference key="2">
    <citation type="journal article" date="2014" name="Toxicon">
        <title>Holocyclotoxin-1, a cystine knot toxin from Ixodes holocyclus.</title>
        <authorList>
            <person name="Vink S."/>
            <person name="Daly N.L."/>
            <person name="Steen N."/>
            <person name="Craik D.J."/>
            <person name="Alewood P.F."/>
        </authorList>
    </citation>
    <scope>STRUCTURE BY NMR OF 23-72</scope>
    <scope>FUNCTION</scope>
    <scope>SYNTHESIS OF 23-72</scope>
    <scope>DISULFIDE BONDS</scope>
</reference>
<feature type="signal peptide" evidence="3">
    <location>
        <begin position="1"/>
        <end position="22"/>
    </location>
</feature>
<feature type="chain" id="PRO_5004262700" description="Holocyclotoxin-1" evidence="3">
    <location>
        <begin position="23"/>
        <end position="72"/>
    </location>
</feature>
<feature type="disulfide bond" evidence="1">
    <location>
        <begin position="24"/>
        <end position="40"/>
    </location>
</feature>
<feature type="disulfide bond" evidence="1">
    <location>
        <begin position="32"/>
        <end position="57"/>
    </location>
</feature>
<feature type="disulfide bond" evidence="1">
    <location>
        <begin position="36"/>
        <end position="60"/>
    </location>
</feature>
<feature type="disulfide bond" evidence="1">
    <location>
        <begin position="42"/>
        <end position="70"/>
    </location>
</feature>
<name>HT1_IXOHO</name>
<comment type="function">
    <text evidence="3">Probable neurotoxin.</text>
</comment>
<comment type="subcellular location">
    <subcellularLocation>
        <location evidence="3">Secreted</location>
    </subcellularLocation>
</comment>
<comment type="tissue specificity">
    <text evidence="3">Expressed in salivary glands.</text>
</comment>
<proteinExistence type="evidence at protein level"/>
<protein>
    <recommendedName>
        <fullName evidence="2">Holocyclotoxin-1</fullName>
        <shortName evidence="2">Ht-1</shortName>
    </recommendedName>
</protein>
<sequence>MSKVTTVFIGALVLLLLIENGFSCTNPGKKRCNAKCSTHCDCKDGPTHNFGAGPVQCKKCTYQFKGEAYCKQ</sequence>
<organism>
    <name type="scientific">Ixodes holocyclus</name>
    <name type="common">Australian paralysis tick</name>
    <dbReference type="NCBI Taxonomy" id="65647"/>
    <lineage>
        <taxon>Eukaryota</taxon>
        <taxon>Metazoa</taxon>
        <taxon>Ecdysozoa</taxon>
        <taxon>Arthropoda</taxon>
        <taxon>Chelicerata</taxon>
        <taxon>Arachnida</taxon>
        <taxon>Acari</taxon>
        <taxon>Parasitiformes</taxon>
        <taxon>Ixodida</taxon>
        <taxon>Ixodoidea</taxon>
        <taxon>Ixodidae</taxon>
        <taxon>Ixodinae</taxon>
        <taxon>Ixodes</taxon>
    </lineage>
</organism>
<accession>Q5UB45</accession>
<dbReference type="EMBL" id="AY766147">
    <property type="protein sequence ID" value="AAV34602.1"/>
    <property type="molecule type" value="mRNA"/>
</dbReference>
<dbReference type="GO" id="GO:0005576">
    <property type="term" value="C:extracellular region"/>
    <property type="evidence" value="ECO:0007669"/>
    <property type="project" value="UniProtKB-SubCell"/>
</dbReference>
<dbReference type="GO" id="GO:0090729">
    <property type="term" value="F:toxin activity"/>
    <property type="evidence" value="ECO:0007669"/>
    <property type="project" value="UniProtKB-KW"/>
</dbReference>
<gene>
    <name evidence="4" type="primary">HT1</name>
</gene>